<organism evidence="4">
    <name type="scientific">Paralithodes camtschaticus</name>
    <name type="common">Red king crab</name>
    <name type="synonym">Maja camtschatica</name>
    <dbReference type="NCBI Taxonomy" id="6741"/>
    <lineage>
        <taxon>Eukaryota</taxon>
        <taxon>Metazoa</taxon>
        <taxon>Ecdysozoa</taxon>
        <taxon>Arthropoda</taxon>
        <taxon>Crustacea</taxon>
        <taxon>Multicrustacea</taxon>
        <taxon>Malacostraca</taxon>
        <taxon>Eumalacostraca</taxon>
        <taxon>Eucarida</taxon>
        <taxon>Decapoda</taxon>
        <taxon>Pleocyemata</taxon>
        <taxon>Anomura</taxon>
        <taxon>Paguroidea</taxon>
        <taxon>Lithodidae</taxon>
        <taxon>Paralithodes</taxon>
    </lineage>
</organism>
<protein>
    <recommendedName>
        <fullName evidence="4">Paralithocin 3</fullName>
    </recommendedName>
    <alternativeName>
        <fullName evidence="2">P34</fullName>
    </alternativeName>
</protein>
<evidence type="ECO:0000269" key="1">
    <source>
    </source>
</evidence>
<evidence type="ECO:0000303" key="2">
    <source>
    </source>
</evidence>
<evidence type="ECO:0000305" key="3">
    <source>
    </source>
</evidence>
<evidence type="ECO:0000312" key="4">
    <source>
        <dbReference type="EMBL" id="AUT12059.1"/>
    </source>
</evidence>
<comment type="function">
    <text evidence="1">Has antibacterial activity, mainly against marine Gram-positive bacteria like C.maltaromaticum (MIC=25 uM), C.mobile (MIC=12.5 uM), C.divergens (MIC=25 uM) and C.funditum (MIC=12.5 uM) but also against C.glutamicum (MIC=12.5 uM). Has very little or no activity against Gram-negative bacteria.</text>
</comment>
<comment type="PTM">
    <text evidence="2">The amidated form is probably the active form.</text>
</comment>
<comment type="mass spectrometry">
    <text>Amidated.</text>
</comment>
<comment type="mass spectrometry">
    <text>Not amidated.</text>
</comment>
<comment type="similarity">
    <text evidence="3">Belongs to the paralithocin family.</text>
</comment>
<reference evidence="4" key="1">
    <citation type="journal article" date="2018" name="J. Nat. Prod.">
        <title>Paralithocins, Antimicrobial Peptides with Unusual Disulfide Connectivity from the Red King Crab, Paralithodes camtschaticus.</title>
        <authorList>
            <person name="Moe M.K."/>
            <person name="Haug T."/>
            <person name="Sydnes M.O."/>
            <person name="Sperstad S.V."/>
            <person name="Li C."/>
            <person name="Vaagsfjord L.C."/>
            <person name="de la Vega E."/>
            <person name="Stensvaag K."/>
        </authorList>
    </citation>
    <scope>NUCLEOTIDE SEQUENCE [MRNA]</scope>
    <scope>PROTEIN SEQUENCE OF 24-74</scope>
    <scope>FUNCTION</scope>
    <scope>MASS SPECTROMETRY</scope>
    <scope>AMIDATION AT PRO-74</scope>
    <scope>DISULFIDE BONDS</scope>
    <scope>IDENTIFICATION BY MASS SPECTROMETRY</scope>
    <source>
        <tissue evidence="2">Hemocyte</tissue>
    </source>
</reference>
<sequence>MGPMKVLLVMLVVMVAAPHIADARSQPGPTCPSSVQAILCDNRCGRSACSYYIERCACCAKCNRIPYYGASNHPGR</sequence>
<proteinExistence type="evidence at protein level"/>
<dbReference type="EMBL" id="MF919586">
    <property type="protein sequence ID" value="AUT12059.1"/>
    <property type="molecule type" value="mRNA"/>
</dbReference>
<dbReference type="GO" id="GO:0050830">
    <property type="term" value="P:defense response to Gram-positive bacterium"/>
    <property type="evidence" value="ECO:0000314"/>
    <property type="project" value="UniProtKB"/>
</dbReference>
<dbReference type="GO" id="GO:0031640">
    <property type="term" value="P:killing of cells of another organism"/>
    <property type="evidence" value="ECO:0000314"/>
    <property type="project" value="UniProtKB"/>
</dbReference>
<feature type="signal peptide" evidence="1">
    <location>
        <begin position="1"/>
        <end position="23"/>
    </location>
</feature>
<feature type="peptide" id="PRO_0000444569" description="Paralithocin 3" evidence="1">
    <location>
        <begin position="24"/>
        <end position="74"/>
    </location>
</feature>
<feature type="modified residue" description="Proline amide; partial" evidence="1">
    <location>
        <position position="74"/>
    </location>
</feature>
<feature type="disulfide bond" evidence="1">
    <location>
        <begin position="31"/>
        <end position="62"/>
    </location>
</feature>
<feature type="disulfide bond" evidence="3">
    <location>
        <begin position="40"/>
        <end position="58"/>
    </location>
</feature>
<feature type="disulfide bond" evidence="3">
    <location>
        <begin position="44"/>
        <end position="56"/>
    </location>
</feature>
<feature type="disulfide bond" evidence="3">
    <location>
        <begin position="49"/>
        <end position="59"/>
    </location>
</feature>
<accession>A0A2I8B353</accession>
<keyword id="KW-0027">Amidation</keyword>
<keyword id="KW-0044">Antibiotic</keyword>
<keyword id="KW-0929">Antimicrobial</keyword>
<keyword id="KW-0903">Direct protein sequencing</keyword>
<keyword id="KW-1015">Disulfide bond</keyword>
<keyword id="KW-0732">Signal</keyword>
<name>AMP3_PARCM</name>